<reference key="1">
    <citation type="submission" date="2002-08" db="EMBL/GenBank/DDBJ databases">
        <title>Cloning of dog preproendothelin-2 cDNA and quantitative method of the gene expression by real-time PCR.</title>
        <authorList>
            <person name="Uchide T."/>
        </authorList>
    </citation>
    <scope>NUCLEOTIDE SEQUENCE [MRNA]</scope>
</reference>
<reference key="2">
    <citation type="journal article" date="1989" name="Nucleic Acids Res.">
        <title>Canine endothelin-2: cDNA sequence for the mature peptide.</title>
        <authorList>
            <person name="Itoh Y."/>
            <person name="Kimura C."/>
            <person name="Onda H."/>
            <person name="Fujino M."/>
        </authorList>
    </citation>
    <scope>NUCLEOTIDE SEQUENCE [MRNA] OF 19-74</scope>
    <source>
        <tissue>Kidney</tissue>
    </source>
</reference>
<accession>P12064</accession>
<accession>Q867C8</accession>
<dbReference type="EMBL" id="AB089264">
    <property type="protein sequence ID" value="BAC56713.1"/>
    <property type="molecule type" value="mRNA"/>
</dbReference>
<dbReference type="EMBL" id="X57038">
    <property type="protein sequence ID" value="CAA40354.1"/>
    <property type="status" value="ALT_SEQ"/>
    <property type="molecule type" value="Genomic_DNA"/>
</dbReference>
<dbReference type="PIR" id="S29563">
    <property type="entry name" value="S29563"/>
</dbReference>
<dbReference type="RefSeq" id="NP_001003002.1">
    <property type="nucleotide sequence ID" value="NM_001003002.1"/>
</dbReference>
<dbReference type="FunCoup" id="P12064">
    <property type="interactions" value="15"/>
</dbReference>
<dbReference type="STRING" id="9615.ENSCAFP00000003751"/>
<dbReference type="PaxDb" id="9612-ENSCAFP00000038061"/>
<dbReference type="Ensembl" id="ENSCAFT00000045204.4">
    <property type="protein sequence ID" value="ENSCAFP00000038061.1"/>
    <property type="gene ID" value="ENSCAFG00000002579.6"/>
</dbReference>
<dbReference type="Ensembl" id="ENSCAFT00030042218.1">
    <property type="protein sequence ID" value="ENSCAFP00030036831.1"/>
    <property type="gene ID" value="ENSCAFG00030022935.1"/>
</dbReference>
<dbReference type="Ensembl" id="ENSCAFT00040020170.1">
    <property type="protein sequence ID" value="ENSCAFP00040017495.1"/>
    <property type="gene ID" value="ENSCAFG00040010846.1"/>
</dbReference>
<dbReference type="Ensembl" id="ENSCAFT00845015151.1">
    <property type="protein sequence ID" value="ENSCAFP00845011762.1"/>
    <property type="gene ID" value="ENSCAFG00845008596.1"/>
</dbReference>
<dbReference type="GeneID" id="403508"/>
<dbReference type="KEGG" id="cfa:403508"/>
<dbReference type="CTD" id="1907"/>
<dbReference type="VEuPathDB" id="HostDB:ENSCAFG00845008596"/>
<dbReference type="VGNC" id="VGNC:40200">
    <property type="gene designation" value="EDN2"/>
</dbReference>
<dbReference type="eggNOG" id="ENOG502S5KM">
    <property type="taxonomic scope" value="Eukaryota"/>
</dbReference>
<dbReference type="GeneTree" id="ENSGT00950000183053"/>
<dbReference type="InParanoid" id="P12064"/>
<dbReference type="OrthoDB" id="9362154at2759"/>
<dbReference type="TreeFam" id="TF333184"/>
<dbReference type="Reactome" id="R-CFA-375276">
    <property type="pathway name" value="Peptide ligand-binding receptors"/>
</dbReference>
<dbReference type="Reactome" id="R-CFA-416476">
    <property type="pathway name" value="G alpha (q) signalling events"/>
</dbReference>
<dbReference type="Proteomes" id="UP000002254">
    <property type="component" value="Chromosome 15"/>
</dbReference>
<dbReference type="Proteomes" id="UP000694429">
    <property type="component" value="Chromosome 15"/>
</dbReference>
<dbReference type="Proteomes" id="UP000694542">
    <property type="component" value="Chromosome 15"/>
</dbReference>
<dbReference type="Proteomes" id="UP000805418">
    <property type="component" value="Chromosome 15"/>
</dbReference>
<dbReference type="Bgee" id="ENSCAFG00000002579">
    <property type="expression patterns" value="Expressed in hair follicle and 20 other cell types or tissues"/>
</dbReference>
<dbReference type="GO" id="GO:0005615">
    <property type="term" value="C:extracellular space"/>
    <property type="evidence" value="ECO:0000318"/>
    <property type="project" value="GO_Central"/>
</dbReference>
<dbReference type="GO" id="GO:0031708">
    <property type="term" value="F:endothelin B receptor binding"/>
    <property type="evidence" value="ECO:0000318"/>
    <property type="project" value="GO_Central"/>
</dbReference>
<dbReference type="GO" id="GO:0005179">
    <property type="term" value="F:hormone activity"/>
    <property type="evidence" value="ECO:0000318"/>
    <property type="project" value="GO_Central"/>
</dbReference>
<dbReference type="GO" id="GO:0006874">
    <property type="term" value="P:intracellular calcium ion homeostasis"/>
    <property type="evidence" value="ECO:0000318"/>
    <property type="project" value="GO_Central"/>
</dbReference>
<dbReference type="GO" id="GO:0045987">
    <property type="term" value="P:positive regulation of smooth muscle contraction"/>
    <property type="evidence" value="ECO:0000318"/>
    <property type="project" value="GO_Central"/>
</dbReference>
<dbReference type="GO" id="GO:0003100">
    <property type="term" value="P:regulation of systemic arterial blood pressure by endothelin"/>
    <property type="evidence" value="ECO:0000318"/>
    <property type="project" value="GO_Central"/>
</dbReference>
<dbReference type="GO" id="GO:0019229">
    <property type="term" value="P:regulation of vasoconstriction"/>
    <property type="evidence" value="ECO:0007669"/>
    <property type="project" value="InterPro"/>
</dbReference>
<dbReference type="GO" id="GO:0014826">
    <property type="term" value="P:vein smooth muscle contraction"/>
    <property type="evidence" value="ECO:0000318"/>
    <property type="project" value="GO_Central"/>
</dbReference>
<dbReference type="InterPro" id="IPR020475">
    <property type="entry name" value="Endothelin"/>
</dbReference>
<dbReference type="InterPro" id="IPR019764">
    <property type="entry name" value="Endothelin_toxin_CS"/>
</dbReference>
<dbReference type="InterPro" id="IPR001928">
    <property type="entry name" value="Endothln-like_toxin"/>
</dbReference>
<dbReference type="PANTHER" id="PTHR13874">
    <property type="entry name" value="ENDOTHELIN"/>
    <property type="match status" value="1"/>
</dbReference>
<dbReference type="PANTHER" id="PTHR13874:SF9">
    <property type="entry name" value="ENDOTHELIN-2"/>
    <property type="match status" value="1"/>
</dbReference>
<dbReference type="Pfam" id="PF00322">
    <property type="entry name" value="Endothelin"/>
    <property type="match status" value="1"/>
</dbReference>
<dbReference type="PRINTS" id="PR00365">
    <property type="entry name" value="ENDOTHELIN"/>
</dbReference>
<dbReference type="SMART" id="SM00272">
    <property type="entry name" value="END"/>
    <property type="match status" value="2"/>
</dbReference>
<dbReference type="PROSITE" id="PS00270">
    <property type="entry name" value="ENDOTHELIN"/>
    <property type="match status" value="2"/>
</dbReference>
<feature type="signal peptide" evidence="2">
    <location>
        <begin position="1"/>
        <end position="24"/>
    </location>
</feature>
<feature type="propeptide" id="PRO_0000008084">
    <location>
        <begin position="25"/>
        <end position="46"/>
    </location>
</feature>
<feature type="peptide" id="PRO_0000008085" description="Endothelin-2">
    <location>
        <begin position="49"/>
        <end position="69"/>
    </location>
</feature>
<feature type="propeptide" id="PRO_0000008086">
    <location>
        <begin position="70"/>
        <end position="178"/>
    </location>
</feature>
<feature type="region of interest" description="Endothelin-like">
    <location>
        <begin position="96"/>
        <end position="111"/>
    </location>
</feature>
<feature type="region of interest" description="Disordered" evidence="3">
    <location>
        <begin position="156"/>
        <end position="178"/>
    </location>
</feature>
<feature type="compositionally biased region" description="Basic residues" evidence="3">
    <location>
        <begin position="169"/>
        <end position="178"/>
    </location>
</feature>
<feature type="site" description="Cleavage; by KEL" evidence="1">
    <location>
        <begin position="69"/>
        <end position="70"/>
    </location>
</feature>
<feature type="disulfide bond" evidence="1">
    <location>
        <begin position="49"/>
        <end position="63"/>
    </location>
</feature>
<feature type="disulfide bond" evidence="1">
    <location>
        <begin position="51"/>
        <end position="59"/>
    </location>
</feature>
<feature type="sequence conflict" description="In Ref. 2; CAA40354." evidence="4" ref="2">
    <original>VA</original>
    <variation>AH</variation>
    <location>
        <begin position="19"/>
        <end position="20"/>
    </location>
</feature>
<protein>
    <recommendedName>
        <fullName>Endothelin-2</fullName>
        <shortName>ET-2</shortName>
    </recommendedName>
    <alternativeName>
        <fullName>Preproendothelin-2</fullName>
        <shortName>PPET2</shortName>
    </alternativeName>
</protein>
<gene>
    <name type="primary">EDN2</name>
</gene>
<evidence type="ECO:0000250" key="1"/>
<evidence type="ECO:0000255" key="2"/>
<evidence type="ECO:0000256" key="3">
    <source>
        <dbReference type="SAM" id="MobiDB-lite"/>
    </source>
</evidence>
<evidence type="ECO:0000305" key="4"/>
<name>EDN2_CANLF</name>
<proteinExistence type="evidence at transcript level"/>
<organism>
    <name type="scientific">Canis lupus familiaris</name>
    <name type="common">Dog</name>
    <name type="synonym">Canis familiaris</name>
    <dbReference type="NCBI Taxonomy" id="9615"/>
    <lineage>
        <taxon>Eukaryota</taxon>
        <taxon>Metazoa</taxon>
        <taxon>Chordata</taxon>
        <taxon>Craniata</taxon>
        <taxon>Vertebrata</taxon>
        <taxon>Euteleostomi</taxon>
        <taxon>Mammalia</taxon>
        <taxon>Eutheria</taxon>
        <taxon>Laurasiatheria</taxon>
        <taxon>Carnivora</taxon>
        <taxon>Caniformia</taxon>
        <taxon>Canidae</taxon>
        <taxon>Canis</taxon>
    </lineage>
</organism>
<sequence length="178" mass="19723">MPAPGVHHPNTASPFLKTVAAGKGQVAAAPEHPAPSARARGSHLRPRRCSCSSWLDKECVYFCHLDIIWVNTPGQTAPYGLGNPPRRRRRSLPKRCECSSGGDPACATFCHRRPWAEAVVVPGSRSPADVFQAGRTWTSAGELLRQLRNISAAKIRFPRRPQEAGRQLRPTHPRRRKR</sequence>
<keyword id="KW-0165">Cleavage on pair of basic residues</keyword>
<keyword id="KW-1015">Disulfide bond</keyword>
<keyword id="KW-1185">Reference proteome</keyword>
<keyword id="KW-0964">Secreted</keyword>
<keyword id="KW-0732">Signal</keyword>
<keyword id="KW-0838">Vasoactive</keyword>
<keyword id="KW-0839">Vasoconstrictor</keyword>
<comment type="function">
    <text>Endothelins are endothelium-derived vasoconstrictor peptides.</text>
</comment>
<comment type="subcellular location">
    <subcellularLocation>
        <location>Secreted</location>
    </subcellularLocation>
</comment>
<comment type="similarity">
    <text evidence="4">Belongs to the endothelin/sarafotoxin family.</text>
</comment>
<comment type="sequence caution" evidence="4">
    <conflict type="miscellaneous discrepancy">
        <sequence resource="EMBL-CDS" id="CAA40354"/>
    </conflict>
</comment>